<accession>Q7VM24</accession>
<name>LPXD_HAEDU</name>
<comment type="function">
    <text evidence="1">Catalyzes the N-acylation of UDP-3-O-acylglucosamine using 3-hydroxyacyl-ACP as the acyl donor. Is involved in the biosynthesis of lipid A, a phosphorylated glycolipid that anchors the lipopolysaccharide to the outer membrane of the cell.</text>
</comment>
<comment type="catalytic activity">
    <reaction evidence="1">
        <text>a UDP-3-O-[(3R)-3-hydroxyacyl]-alpha-D-glucosamine + a (3R)-hydroxyacyl-[ACP] = a UDP-2-N,3-O-bis[(3R)-3-hydroxyacyl]-alpha-D-glucosamine + holo-[ACP] + H(+)</text>
        <dbReference type="Rhea" id="RHEA:53836"/>
        <dbReference type="Rhea" id="RHEA-COMP:9685"/>
        <dbReference type="Rhea" id="RHEA-COMP:9945"/>
        <dbReference type="ChEBI" id="CHEBI:15378"/>
        <dbReference type="ChEBI" id="CHEBI:64479"/>
        <dbReference type="ChEBI" id="CHEBI:78827"/>
        <dbReference type="ChEBI" id="CHEBI:137740"/>
        <dbReference type="ChEBI" id="CHEBI:137748"/>
        <dbReference type="EC" id="2.3.1.191"/>
    </reaction>
</comment>
<comment type="pathway">
    <text evidence="1">Bacterial outer membrane biogenesis; LPS lipid A biosynthesis.</text>
</comment>
<comment type="subunit">
    <text evidence="1">Homotrimer.</text>
</comment>
<comment type="similarity">
    <text evidence="1">Belongs to the transferase hexapeptide repeat family. LpxD subfamily.</text>
</comment>
<organism>
    <name type="scientific">Haemophilus ducreyi (strain 35000HP / ATCC 700724)</name>
    <dbReference type="NCBI Taxonomy" id="233412"/>
    <lineage>
        <taxon>Bacteria</taxon>
        <taxon>Pseudomonadati</taxon>
        <taxon>Pseudomonadota</taxon>
        <taxon>Gammaproteobacteria</taxon>
        <taxon>Pasteurellales</taxon>
        <taxon>Pasteurellaceae</taxon>
        <taxon>Haemophilus</taxon>
    </lineage>
</organism>
<feature type="chain" id="PRO_0000059676" description="UDP-3-O-acylglucosamine N-acyltransferase">
    <location>
        <begin position="1"/>
        <end position="341"/>
    </location>
</feature>
<feature type="active site" description="Proton acceptor" evidence="1">
    <location>
        <position position="241"/>
    </location>
</feature>
<proteinExistence type="inferred from homology"/>
<protein>
    <recommendedName>
        <fullName evidence="1">UDP-3-O-acylglucosamine N-acyltransferase</fullName>
        <ecNumber evidence="1">2.3.1.191</ecNumber>
    </recommendedName>
</protein>
<sequence length="341" mass="36051">MAVFRLSELAEQIGATLKGNADLAITSIAALNNAEPTHITFISNAKYRSQLSQSKAGAIIVTAEDVEFCQATQNLLIVKDPYLAYALLAQYMDDLPKSANEISESAVISATAKLGKNVSIGANVVIESGVELADDITIGAGCFIGKNTKIGARSHLWANISVYHNVEIGSDCLIQSSAVIGSDGFGYANDKGRWIKIPQTGGVIIGNRVEIGACTCIDRGALDPTIIEDNVIIDNLCQIAHNVHIGFGTAIAGGVILAGSLKIGRFCQIGGASVINGHMEICDGAIITGMSMIMKPITEKGVYSSGIPAQTNKEWRKTAALTMNIADMNKRLKAIEKQLTE</sequence>
<dbReference type="EC" id="2.3.1.191" evidence="1"/>
<dbReference type="EMBL" id="AE017143">
    <property type="protein sequence ID" value="AAP96039.1"/>
    <property type="molecule type" value="Genomic_DNA"/>
</dbReference>
<dbReference type="RefSeq" id="WP_010945088.1">
    <property type="nucleotide sequence ID" value="NC_002940.2"/>
</dbReference>
<dbReference type="SMR" id="Q7VM24"/>
<dbReference type="STRING" id="233412.HD_1189"/>
<dbReference type="KEGG" id="hdu:HD_1189"/>
<dbReference type="eggNOG" id="COG1044">
    <property type="taxonomic scope" value="Bacteria"/>
</dbReference>
<dbReference type="HOGENOM" id="CLU_049865_0_1_6"/>
<dbReference type="OrthoDB" id="9784739at2"/>
<dbReference type="UniPathway" id="UPA00973"/>
<dbReference type="Proteomes" id="UP000001022">
    <property type="component" value="Chromosome"/>
</dbReference>
<dbReference type="GO" id="GO:0016020">
    <property type="term" value="C:membrane"/>
    <property type="evidence" value="ECO:0007669"/>
    <property type="project" value="GOC"/>
</dbReference>
<dbReference type="GO" id="GO:0016410">
    <property type="term" value="F:N-acyltransferase activity"/>
    <property type="evidence" value="ECO:0007669"/>
    <property type="project" value="InterPro"/>
</dbReference>
<dbReference type="GO" id="GO:0009245">
    <property type="term" value="P:lipid A biosynthetic process"/>
    <property type="evidence" value="ECO:0007669"/>
    <property type="project" value="UniProtKB-UniRule"/>
</dbReference>
<dbReference type="CDD" id="cd03352">
    <property type="entry name" value="LbH_LpxD"/>
    <property type="match status" value="1"/>
</dbReference>
<dbReference type="FunFam" id="2.160.10.10:FF:000005">
    <property type="entry name" value="UDP-3-O-(3-hydroxymyristoyl)glucosamine N-acyltransferase"/>
    <property type="match status" value="1"/>
</dbReference>
<dbReference type="Gene3D" id="1.20.5.170">
    <property type="match status" value="1"/>
</dbReference>
<dbReference type="Gene3D" id="2.160.10.10">
    <property type="entry name" value="Hexapeptide repeat proteins"/>
    <property type="match status" value="1"/>
</dbReference>
<dbReference type="Gene3D" id="3.40.1390.10">
    <property type="entry name" value="MurE/MurF, N-terminal domain"/>
    <property type="match status" value="1"/>
</dbReference>
<dbReference type="HAMAP" id="MF_00523">
    <property type="entry name" value="LpxD"/>
    <property type="match status" value="1"/>
</dbReference>
<dbReference type="InterPro" id="IPR001451">
    <property type="entry name" value="Hexapep"/>
</dbReference>
<dbReference type="InterPro" id="IPR018357">
    <property type="entry name" value="Hexapep_transf_CS"/>
</dbReference>
<dbReference type="InterPro" id="IPR007691">
    <property type="entry name" value="LpxD"/>
</dbReference>
<dbReference type="InterPro" id="IPR011004">
    <property type="entry name" value="Trimer_LpxA-like_sf"/>
</dbReference>
<dbReference type="InterPro" id="IPR020573">
    <property type="entry name" value="UDP_GlcNAc_AcTrfase_non-rep"/>
</dbReference>
<dbReference type="NCBIfam" id="TIGR01853">
    <property type="entry name" value="lipid_A_lpxD"/>
    <property type="match status" value="1"/>
</dbReference>
<dbReference type="NCBIfam" id="NF002060">
    <property type="entry name" value="PRK00892.1"/>
    <property type="match status" value="1"/>
</dbReference>
<dbReference type="PANTHER" id="PTHR43378">
    <property type="entry name" value="UDP-3-O-ACYLGLUCOSAMINE N-ACYLTRANSFERASE"/>
    <property type="match status" value="1"/>
</dbReference>
<dbReference type="PANTHER" id="PTHR43378:SF2">
    <property type="entry name" value="UDP-3-O-ACYLGLUCOSAMINE N-ACYLTRANSFERASE 1, MITOCHONDRIAL-RELATED"/>
    <property type="match status" value="1"/>
</dbReference>
<dbReference type="Pfam" id="PF00132">
    <property type="entry name" value="Hexapep"/>
    <property type="match status" value="2"/>
</dbReference>
<dbReference type="Pfam" id="PF04613">
    <property type="entry name" value="LpxD"/>
    <property type="match status" value="1"/>
</dbReference>
<dbReference type="SUPFAM" id="SSF51161">
    <property type="entry name" value="Trimeric LpxA-like enzymes"/>
    <property type="match status" value="1"/>
</dbReference>
<dbReference type="PROSITE" id="PS00101">
    <property type="entry name" value="HEXAPEP_TRANSFERASES"/>
    <property type="match status" value="1"/>
</dbReference>
<gene>
    <name evidence="1" type="primary">lpxD</name>
    <name type="ordered locus">HD_1189</name>
</gene>
<keyword id="KW-0012">Acyltransferase</keyword>
<keyword id="KW-0441">Lipid A biosynthesis</keyword>
<keyword id="KW-0444">Lipid biosynthesis</keyword>
<keyword id="KW-0443">Lipid metabolism</keyword>
<keyword id="KW-1185">Reference proteome</keyword>
<keyword id="KW-0677">Repeat</keyword>
<keyword id="KW-0808">Transferase</keyword>
<reference key="1">
    <citation type="submission" date="2003-06" db="EMBL/GenBank/DDBJ databases">
        <title>The complete genome sequence of Haemophilus ducreyi.</title>
        <authorList>
            <person name="Munson R.S. Jr."/>
            <person name="Ray W.C."/>
            <person name="Mahairas G."/>
            <person name="Sabo P."/>
            <person name="Mungur R."/>
            <person name="Johnson L."/>
            <person name="Nguyen D."/>
            <person name="Wang J."/>
            <person name="Forst C."/>
            <person name="Hood L."/>
        </authorList>
    </citation>
    <scope>NUCLEOTIDE SEQUENCE [LARGE SCALE GENOMIC DNA]</scope>
    <source>
        <strain>35000HP / ATCC 700724</strain>
    </source>
</reference>
<evidence type="ECO:0000255" key="1">
    <source>
        <dbReference type="HAMAP-Rule" id="MF_00523"/>
    </source>
</evidence>